<name>SPRN_SHEEP</name>
<feature type="signal peptide" evidence="2">
    <location>
        <begin position="1"/>
        <end position="24"/>
    </location>
</feature>
<feature type="chain" id="PRO_0000320170" description="Shadow of prion protein">
    <location>
        <begin position="25"/>
        <end position="119"/>
    </location>
</feature>
<feature type="propeptide" id="PRO_0000320171" description="Removed in mature form" evidence="2">
    <location>
        <begin position="120"/>
        <end position="145"/>
    </location>
</feature>
<feature type="lipid moiety-binding region" description="GPI-anchor amidated serine" evidence="2">
    <location>
        <position position="119"/>
    </location>
</feature>
<feature type="glycosylation site" description="N-linked (GlcNAc...) asparagine" evidence="2">
    <location>
        <position position="105"/>
    </location>
</feature>
<accession>A6XN32</accession>
<sequence>MNWAAAVCWALLLAATFLCDGSAAKGGRGGARGSARGGRGAARVRVRPAPRYAGSSVRAAAGAAAGAAAAAGVAAGLAAGSSWRRAAGPAELGLEDAEDGAPGSNGTGRGVYSYWAWTSGAGPTGHRHLCPLLGGALGALRLLRP</sequence>
<keyword id="KW-0034">Amyloid</keyword>
<keyword id="KW-1003">Cell membrane</keyword>
<keyword id="KW-0325">Glycoprotein</keyword>
<keyword id="KW-0336">GPI-anchor</keyword>
<keyword id="KW-0449">Lipoprotein</keyword>
<keyword id="KW-0472">Membrane</keyword>
<keyword id="KW-0640">Prion</keyword>
<keyword id="KW-1185">Reference proteome</keyword>
<keyword id="KW-0732">Signal</keyword>
<gene>
    <name type="primary">SPRN</name>
</gene>
<reference key="1">
    <citation type="journal article" date="2007" name="BMC Genomics">
        <title>Characterization of the genomic region containing the Shadow of Prion Protein (SPRN) gene in sheep.</title>
        <authorList>
            <person name="Lampo E."/>
            <person name="Van Poucke M."/>
            <person name="Hugot K."/>
            <person name="Hayes H."/>
            <person name="Van Zeveren A."/>
            <person name="Peelman L.J."/>
        </authorList>
    </citation>
    <scope>NUCLEOTIDE SEQUENCE [GENOMIC DNA]</scope>
    <scope>TISSUE SPECIFICITY</scope>
</reference>
<proteinExistence type="evidence at transcript level"/>
<organism>
    <name type="scientific">Ovis aries</name>
    <name type="common">Sheep</name>
    <dbReference type="NCBI Taxonomy" id="9940"/>
    <lineage>
        <taxon>Eukaryota</taxon>
        <taxon>Metazoa</taxon>
        <taxon>Chordata</taxon>
        <taxon>Craniata</taxon>
        <taxon>Vertebrata</taxon>
        <taxon>Euteleostomi</taxon>
        <taxon>Mammalia</taxon>
        <taxon>Eutheria</taxon>
        <taxon>Laurasiatheria</taxon>
        <taxon>Artiodactyla</taxon>
        <taxon>Ruminantia</taxon>
        <taxon>Pecora</taxon>
        <taxon>Bovidae</taxon>
        <taxon>Caprinae</taxon>
        <taxon>Ovis</taxon>
    </lineage>
</organism>
<evidence type="ECO:0000250" key="1"/>
<evidence type="ECO:0000255" key="2"/>
<evidence type="ECO:0000269" key="3">
    <source>
    </source>
</evidence>
<evidence type="ECO:0000305" key="4"/>
<dbReference type="EMBL" id="DQ870545">
    <property type="protein sequence ID" value="ABI34467.1"/>
    <property type="molecule type" value="Genomic_DNA"/>
</dbReference>
<dbReference type="RefSeq" id="NP_001156033.1">
    <property type="nucleotide sequence ID" value="NM_001162561.1"/>
</dbReference>
<dbReference type="GlyCosmos" id="A6XN32">
    <property type="glycosylation" value="1 site, No reported glycans"/>
</dbReference>
<dbReference type="Ensembl" id="ENSOART00185017836">
    <property type="protein sequence ID" value="ENSOARP00185008819"/>
    <property type="gene ID" value="ENSOARG00185010980"/>
</dbReference>
<dbReference type="Ensembl" id="ENSOART00260034607">
    <property type="protein sequence ID" value="ENSOARP00260017813"/>
    <property type="gene ID" value="ENSOARG00260021146"/>
</dbReference>
<dbReference type="GeneID" id="100302330"/>
<dbReference type="KEGG" id="oas:100302330"/>
<dbReference type="CTD" id="503542"/>
<dbReference type="OrthoDB" id="9809656at2759"/>
<dbReference type="Proteomes" id="UP000002356">
    <property type="component" value="Unplaced"/>
</dbReference>
<dbReference type="GO" id="GO:0005634">
    <property type="term" value="C:nucleus"/>
    <property type="evidence" value="ECO:0007669"/>
    <property type="project" value="TreeGrafter"/>
</dbReference>
<dbReference type="GO" id="GO:0005886">
    <property type="term" value="C:plasma membrane"/>
    <property type="evidence" value="ECO:0007669"/>
    <property type="project" value="UniProtKB-SubCell"/>
</dbReference>
<dbReference type="GO" id="GO:0098552">
    <property type="term" value="C:side of membrane"/>
    <property type="evidence" value="ECO:0007669"/>
    <property type="project" value="UniProtKB-KW"/>
</dbReference>
<dbReference type="GO" id="GO:0003676">
    <property type="term" value="F:nucleic acid binding"/>
    <property type="evidence" value="ECO:0007669"/>
    <property type="project" value="TreeGrafter"/>
</dbReference>
<dbReference type="GO" id="GO:0006606">
    <property type="term" value="P:protein import into nucleus"/>
    <property type="evidence" value="ECO:0007669"/>
    <property type="project" value="TreeGrafter"/>
</dbReference>
<dbReference type="InterPro" id="IPR029238">
    <property type="entry name" value="Shadoo"/>
</dbReference>
<dbReference type="PANTHER" id="PTHR28552">
    <property type="entry name" value="SHADOW OF PRION PROTEIN"/>
    <property type="match status" value="1"/>
</dbReference>
<dbReference type="PANTHER" id="PTHR28552:SF1">
    <property type="entry name" value="SHADOW OF PRION PROTEIN"/>
    <property type="match status" value="1"/>
</dbReference>
<dbReference type="Pfam" id="PF14999">
    <property type="entry name" value="Shadoo"/>
    <property type="match status" value="1"/>
</dbReference>
<comment type="function">
    <text evidence="1">Prion-like protein that has PrP(C)-like neuroprotective activity. May act as a modulator for the biological actions of normal and abnormal PrP (By similarity).</text>
</comment>
<comment type="subcellular location">
    <subcellularLocation>
        <location evidence="1">Cell membrane</location>
        <topology evidence="1">Lipid-anchor</topology>
        <topology evidence="1">GPI-anchor</topology>
    </subcellularLocation>
</comment>
<comment type="tissue specificity">
    <text evidence="3">Mainly expressed in brain.</text>
</comment>
<comment type="PTM">
    <text evidence="1">N-glycosylated.</text>
</comment>
<comment type="similarity">
    <text evidence="4">Belongs to the SPRN family.</text>
</comment>
<protein>
    <recommendedName>
        <fullName>Shadow of prion protein</fullName>
        <shortName>Protein shadoo</shortName>
    </recommendedName>
</protein>